<dbReference type="EC" id="6.1.1.21" evidence="1"/>
<dbReference type="EMBL" id="CR767821">
    <property type="protein sequence ID" value="CAH58433.1"/>
    <property type="molecule type" value="Genomic_DNA"/>
</dbReference>
<dbReference type="EMBL" id="CR925678">
    <property type="protein sequence ID" value="CAI27230.1"/>
    <property type="molecule type" value="Genomic_DNA"/>
</dbReference>
<dbReference type="RefSeq" id="WP_011155380.1">
    <property type="nucleotide sequence ID" value="NC_005295.2"/>
</dbReference>
<dbReference type="SMR" id="Q5HAI0"/>
<dbReference type="GeneID" id="33057581"/>
<dbReference type="KEGG" id="eru:Erum7010"/>
<dbReference type="KEGG" id="erw:ERWE_CDS_07360"/>
<dbReference type="eggNOG" id="COG0124">
    <property type="taxonomic scope" value="Bacteria"/>
</dbReference>
<dbReference type="HOGENOM" id="CLU_025113_1_0_5"/>
<dbReference type="Proteomes" id="UP000001021">
    <property type="component" value="Chromosome"/>
</dbReference>
<dbReference type="GO" id="GO:0005737">
    <property type="term" value="C:cytoplasm"/>
    <property type="evidence" value="ECO:0007669"/>
    <property type="project" value="UniProtKB-SubCell"/>
</dbReference>
<dbReference type="GO" id="GO:0005524">
    <property type="term" value="F:ATP binding"/>
    <property type="evidence" value="ECO:0007669"/>
    <property type="project" value="UniProtKB-UniRule"/>
</dbReference>
<dbReference type="GO" id="GO:0004821">
    <property type="term" value="F:histidine-tRNA ligase activity"/>
    <property type="evidence" value="ECO:0007669"/>
    <property type="project" value="UniProtKB-UniRule"/>
</dbReference>
<dbReference type="GO" id="GO:0006427">
    <property type="term" value="P:histidyl-tRNA aminoacylation"/>
    <property type="evidence" value="ECO:0007669"/>
    <property type="project" value="UniProtKB-UniRule"/>
</dbReference>
<dbReference type="CDD" id="cd00773">
    <property type="entry name" value="HisRS-like_core"/>
    <property type="match status" value="1"/>
</dbReference>
<dbReference type="Gene3D" id="3.40.50.800">
    <property type="entry name" value="Anticodon-binding domain"/>
    <property type="match status" value="1"/>
</dbReference>
<dbReference type="Gene3D" id="3.30.930.10">
    <property type="entry name" value="Bira Bifunctional Protein, Domain 2"/>
    <property type="match status" value="1"/>
</dbReference>
<dbReference type="HAMAP" id="MF_00127">
    <property type="entry name" value="His_tRNA_synth"/>
    <property type="match status" value="1"/>
</dbReference>
<dbReference type="InterPro" id="IPR006195">
    <property type="entry name" value="aa-tRNA-synth_II"/>
</dbReference>
<dbReference type="InterPro" id="IPR045864">
    <property type="entry name" value="aa-tRNA-synth_II/BPL/LPL"/>
</dbReference>
<dbReference type="InterPro" id="IPR004154">
    <property type="entry name" value="Anticodon-bd"/>
</dbReference>
<dbReference type="InterPro" id="IPR036621">
    <property type="entry name" value="Anticodon-bd_dom_sf"/>
</dbReference>
<dbReference type="InterPro" id="IPR015807">
    <property type="entry name" value="His-tRNA-ligase"/>
</dbReference>
<dbReference type="InterPro" id="IPR041715">
    <property type="entry name" value="HisRS-like_core"/>
</dbReference>
<dbReference type="InterPro" id="IPR004516">
    <property type="entry name" value="HisRS/HisZ"/>
</dbReference>
<dbReference type="NCBIfam" id="TIGR00442">
    <property type="entry name" value="hisS"/>
    <property type="match status" value="1"/>
</dbReference>
<dbReference type="PANTHER" id="PTHR43707:SF1">
    <property type="entry name" value="HISTIDINE--TRNA LIGASE, MITOCHONDRIAL-RELATED"/>
    <property type="match status" value="1"/>
</dbReference>
<dbReference type="PANTHER" id="PTHR43707">
    <property type="entry name" value="HISTIDYL-TRNA SYNTHETASE"/>
    <property type="match status" value="1"/>
</dbReference>
<dbReference type="Pfam" id="PF03129">
    <property type="entry name" value="HGTP_anticodon"/>
    <property type="match status" value="1"/>
</dbReference>
<dbReference type="Pfam" id="PF13393">
    <property type="entry name" value="tRNA-synt_His"/>
    <property type="match status" value="1"/>
</dbReference>
<dbReference type="PIRSF" id="PIRSF001549">
    <property type="entry name" value="His-tRNA_synth"/>
    <property type="match status" value="1"/>
</dbReference>
<dbReference type="SUPFAM" id="SSF52954">
    <property type="entry name" value="Class II aaRS ABD-related"/>
    <property type="match status" value="1"/>
</dbReference>
<dbReference type="SUPFAM" id="SSF55681">
    <property type="entry name" value="Class II aaRS and biotin synthetases"/>
    <property type="match status" value="1"/>
</dbReference>
<dbReference type="PROSITE" id="PS50862">
    <property type="entry name" value="AA_TRNA_LIGASE_II"/>
    <property type="match status" value="1"/>
</dbReference>
<sequence>MQHNKLREVRGTKDLLDDELYKFQYIQHLAQTIASRYGFIPVDTPIIEFTEVFTKLGNTSDIVTKEMYNFKDKAGEDITLRPEFTSAIVRLLISKNLTIPVKLFSSGPVFRYERPQKCRQRQFHQINFEFFGSDSPIADVEMISLCYNILSELKLSDRIKLEINFLGDQETINSYKIHLVEYLNKYQKDLSEDSQRRLVVNPLRILDSKSPEDCKILLNAPSISDFYNQNSQNFFKEVLDGLDNLSINYVINHNIVRGLDYYCKTVFEFTTSELGSQNSVIAGGRYDGLVKSMGGHSTPAIGFAAGVERLSALIDYEHKKPKRIVLIPIGDDAISYAIKLAYELRCKGIHVCWNNYRGTSLKNELRKANDTDIVLIFGDEELQSNTVKVKDMKTGDQQNVAVCDLLDNLLYRIV</sequence>
<accession>Q5HAI0</accession>
<accession>Q5FDH5</accession>
<evidence type="ECO:0000255" key="1">
    <source>
        <dbReference type="HAMAP-Rule" id="MF_00127"/>
    </source>
</evidence>
<name>SYH_EHRRW</name>
<feature type="chain" id="PRO_0000136158" description="Histidine--tRNA ligase">
    <location>
        <begin position="1"/>
        <end position="414"/>
    </location>
</feature>
<reference key="1">
    <citation type="journal article" date="2005" name="Proc. Natl. Acad. Sci. U.S.A.">
        <title>The genome of the heartwater agent Ehrlichia ruminantium contains multiple tandem repeats of actively variable copy number.</title>
        <authorList>
            <person name="Collins N.E."/>
            <person name="Liebenberg J."/>
            <person name="de Villiers E.P."/>
            <person name="Brayton K.A."/>
            <person name="Louw E."/>
            <person name="Pretorius A."/>
            <person name="Faber F.E."/>
            <person name="van Heerden H."/>
            <person name="Josemans A."/>
            <person name="van Kleef M."/>
            <person name="Steyn H.C."/>
            <person name="van Strijp M.F."/>
            <person name="Zweygarth E."/>
            <person name="Jongejan F."/>
            <person name="Maillard J.C."/>
            <person name="Berthier D."/>
            <person name="Botha M."/>
            <person name="Joubert F."/>
            <person name="Corton C.H."/>
            <person name="Thomson N.R."/>
            <person name="Allsopp M.T."/>
            <person name="Allsopp B.A."/>
        </authorList>
    </citation>
    <scope>NUCLEOTIDE SEQUENCE [LARGE SCALE GENOMIC DNA]</scope>
    <source>
        <strain>Welgevonden</strain>
    </source>
</reference>
<reference key="2">
    <citation type="journal article" date="2006" name="J. Bacteriol.">
        <title>Comparative genomic analysis of three strains of Ehrlichia ruminantium reveals an active process of genome size plasticity.</title>
        <authorList>
            <person name="Frutos R."/>
            <person name="Viari A."/>
            <person name="Ferraz C."/>
            <person name="Morgat A."/>
            <person name="Eychenie S."/>
            <person name="Kandassamy Y."/>
            <person name="Chantal I."/>
            <person name="Bensaid A."/>
            <person name="Coissac E."/>
            <person name="Vachiery N."/>
            <person name="Demaille J."/>
            <person name="Martinez D."/>
        </authorList>
    </citation>
    <scope>NUCLEOTIDE SEQUENCE [LARGE SCALE GENOMIC DNA]</scope>
    <source>
        <strain>Welgevonden</strain>
    </source>
</reference>
<keyword id="KW-0030">Aminoacyl-tRNA synthetase</keyword>
<keyword id="KW-0067">ATP-binding</keyword>
<keyword id="KW-0963">Cytoplasm</keyword>
<keyword id="KW-0436">Ligase</keyword>
<keyword id="KW-0547">Nucleotide-binding</keyword>
<keyword id="KW-0648">Protein biosynthesis</keyword>
<gene>
    <name evidence="1" type="primary">hisS</name>
    <name type="ordered locus">Erum7010</name>
    <name type="ordered locus">ERWE_CDS_07360</name>
</gene>
<protein>
    <recommendedName>
        <fullName evidence="1">Histidine--tRNA ligase</fullName>
        <ecNumber evidence="1">6.1.1.21</ecNumber>
    </recommendedName>
    <alternativeName>
        <fullName evidence="1">Histidyl-tRNA synthetase</fullName>
        <shortName evidence="1">HisRS</shortName>
    </alternativeName>
</protein>
<organism>
    <name type="scientific">Ehrlichia ruminantium (strain Welgevonden)</name>
    <dbReference type="NCBI Taxonomy" id="254945"/>
    <lineage>
        <taxon>Bacteria</taxon>
        <taxon>Pseudomonadati</taxon>
        <taxon>Pseudomonadota</taxon>
        <taxon>Alphaproteobacteria</taxon>
        <taxon>Rickettsiales</taxon>
        <taxon>Anaplasmataceae</taxon>
        <taxon>Ehrlichia</taxon>
    </lineage>
</organism>
<proteinExistence type="inferred from homology"/>
<comment type="catalytic activity">
    <reaction evidence="1">
        <text>tRNA(His) + L-histidine + ATP = L-histidyl-tRNA(His) + AMP + diphosphate + H(+)</text>
        <dbReference type="Rhea" id="RHEA:17313"/>
        <dbReference type="Rhea" id="RHEA-COMP:9665"/>
        <dbReference type="Rhea" id="RHEA-COMP:9689"/>
        <dbReference type="ChEBI" id="CHEBI:15378"/>
        <dbReference type="ChEBI" id="CHEBI:30616"/>
        <dbReference type="ChEBI" id="CHEBI:33019"/>
        <dbReference type="ChEBI" id="CHEBI:57595"/>
        <dbReference type="ChEBI" id="CHEBI:78442"/>
        <dbReference type="ChEBI" id="CHEBI:78527"/>
        <dbReference type="ChEBI" id="CHEBI:456215"/>
        <dbReference type="EC" id="6.1.1.21"/>
    </reaction>
</comment>
<comment type="subunit">
    <text evidence="1">Homodimer.</text>
</comment>
<comment type="subcellular location">
    <subcellularLocation>
        <location evidence="1">Cytoplasm</location>
    </subcellularLocation>
</comment>
<comment type="similarity">
    <text evidence="1">Belongs to the class-II aminoacyl-tRNA synthetase family.</text>
</comment>